<feature type="chain" id="PRO_0000219515" description="Gibberellin 20 oxidase 2">
    <location>
        <begin position="1"/>
        <end position="378"/>
    </location>
</feature>
<feature type="domain" description="Fe2OG dioxygenase" evidence="2">
    <location>
        <begin position="220"/>
        <end position="320"/>
    </location>
</feature>
<feature type="region of interest" description="Disordered" evidence="3">
    <location>
        <begin position="1"/>
        <end position="26"/>
    </location>
</feature>
<feature type="compositionally biased region" description="Polar residues" evidence="3">
    <location>
        <begin position="1"/>
        <end position="10"/>
    </location>
</feature>
<feature type="compositionally biased region" description="Basic and acidic residues" evidence="3">
    <location>
        <begin position="11"/>
        <end position="25"/>
    </location>
</feature>
<feature type="active site" evidence="1">
    <location>
        <position position="311"/>
    </location>
</feature>
<feature type="binding site" evidence="2">
    <location>
        <position position="245"/>
    </location>
    <ligand>
        <name>Fe cation</name>
        <dbReference type="ChEBI" id="CHEBI:24875"/>
    </ligand>
</feature>
<feature type="binding site" evidence="2">
    <location>
        <position position="247"/>
    </location>
    <ligand>
        <name>Fe cation</name>
        <dbReference type="ChEBI" id="CHEBI:24875"/>
    </ligand>
</feature>
<feature type="binding site" evidence="2">
    <location>
        <position position="301"/>
    </location>
    <ligand>
        <name>Fe cation</name>
        <dbReference type="ChEBI" id="CHEBI:24875"/>
    </ligand>
</feature>
<keyword id="KW-0408">Iron</keyword>
<keyword id="KW-0479">Metal-binding</keyword>
<keyword id="KW-0560">Oxidoreductase</keyword>
<keyword id="KW-1185">Reference proteome</keyword>
<accession>Q39111</accession>
<comment type="function">
    <text evidence="8 9">Key oxidase enzyme in the biosynthesis of gibberellin that catalyzes the conversion of GA12 to GA9, via a three-step oxidation at C-20 of the GA skeleton, and GA25 is also formed as a minor product. GA53 is less effectively oxidized than GA12 and is only oxidized one step to GA44 (PubMed:7630935). Involved in the promotion of the floral transition, fertility and silique elongation, but plays only a minor role in elongation of seedling organs. Acts redundantly with GA20OX1 (PubMed:18069939).</text>
</comment>
<comment type="catalytic activity">
    <reaction evidence="9">
        <text>gibberellin A12 + 2 2-oxoglutarate + 3 O2 + H(+) = gibberellin A9 + 2 succinate + 3 CO2 + 2 H2O</text>
        <dbReference type="Rhea" id="RHEA:60772"/>
        <dbReference type="ChEBI" id="CHEBI:15377"/>
        <dbReference type="ChEBI" id="CHEBI:15378"/>
        <dbReference type="ChEBI" id="CHEBI:15379"/>
        <dbReference type="ChEBI" id="CHEBI:16526"/>
        <dbReference type="ChEBI" id="CHEBI:16810"/>
        <dbReference type="ChEBI" id="CHEBI:30031"/>
        <dbReference type="ChEBI" id="CHEBI:58627"/>
        <dbReference type="ChEBI" id="CHEBI:73255"/>
    </reaction>
    <physiologicalReaction direction="left-to-right" evidence="9">
        <dbReference type="Rhea" id="RHEA:60773"/>
    </physiologicalReaction>
</comment>
<comment type="catalytic activity">
    <reaction evidence="9">
        <text>gibberellin A12 + 2-oxoglutarate + O2 = gibberellin A15 + succinate + CO2</text>
        <dbReference type="Rhea" id="RHEA:60776"/>
        <dbReference type="ChEBI" id="CHEBI:15379"/>
        <dbReference type="ChEBI" id="CHEBI:16526"/>
        <dbReference type="ChEBI" id="CHEBI:16810"/>
        <dbReference type="ChEBI" id="CHEBI:30031"/>
        <dbReference type="ChEBI" id="CHEBI:58627"/>
        <dbReference type="ChEBI" id="CHEBI:143956"/>
    </reaction>
    <physiologicalReaction direction="left-to-right" evidence="9">
        <dbReference type="Rhea" id="RHEA:60777"/>
    </physiologicalReaction>
</comment>
<comment type="catalytic activity">
    <reaction evidence="9">
        <text>gibberellin A15 + 2-oxoglutarate + O2 = gibberellin A24 + succinate + CO2 + H2O</text>
        <dbReference type="Rhea" id="RHEA:60780"/>
        <dbReference type="ChEBI" id="CHEBI:15377"/>
        <dbReference type="ChEBI" id="CHEBI:15379"/>
        <dbReference type="ChEBI" id="CHEBI:16526"/>
        <dbReference type="ChEBI" id="CHEBI:16810"/>
        <dbReference type="ChEBI" id="CHEBI:30031"/>
        <dbReference type="ChEBI" id="CHEBI:143956"/>
        <dbReference type="ChEBI" id="CHEBI:143957"/>
    </reaction>
    <physiologicalReaction direction="left-to-right" evidence="9">
        <dbReference type="Rhea" id="RHEA:60781"/>
    </physiologicalReaction>
</comment>
<comment type="catalytic activity">
    <reaction evidence="9">
        <text>gibberellin A53 + 2-oxoglutarate + O2 = gibberellin A44 + succinate + CO2</text>
        <dbReference type="Rhea" id="RHEA:60800"/>
        <dbReference type="ChEBI" id="CHEBI:15379"/>
        <dbReference type="ChEBI" id="CHEBI:16526"/>
        <dbReference type="ChEBI" id="CHEBI:16810"/>
        <dbReference type="ChEBI" id="CHEBI:30031"/>
        <dbReference type="ChEBI" id="CHEBI:143954"/>
        <dbReference type="ChEBI" id="CHEBI:143955"/>
    </reaction>
    <physiologicalReaction direction="left-to-right" evidence="9">
        <dbReference type="Rhea" id="RHEA:60801"/>
    </physiologicalReaction>
</comment>
<comment type="catalytic activity">
    <reaction evidence="9">
        <text>gibberellin A12 + 3 2-oxoglutarate + 3 O2 = gibberellin A25 + 3 succinate + 3 CO2 + H2O + H(+)</text>
        <dbReference type="Rhea" id="RHEA:60768"/>
        <dbReference type="ChEBI" id="CHEBI:15377"/>
        <dbReference type="ChEBI" id="CHEBI:15378"/>
        <dbReference type="ChEBI" id="CHEBI:15379"/>
        <dbReference type="ChEBI" id="CHEBI:16526"/>
        <dbReference type="ChEBI" id="CHEBI:16810"/>
        <dbReference type="ChEBI" id="CHEBI:30031"/>
        <dbReference type="ChEBI" id="CHEBI:58627"/>
        <dbReference type="ChEBI" id="CHEBI:143959"/>
    </reaction>
    <physiologicalReaction direction="left-to-right" evidence="9">
        <dbReference type="Rhea" id="RHEA:60769"/>
    </physiologicalReaction>
</comment>
<comment type="cofactor">
    <cofactor>
        <name>Fe(2+)</name>
        <dbReference type="ChEBI" id="CHEBI:29033"/>
    </cofactor>
    <text>Binds 1 Fe(2+) ion per subunit.</text>
</comment>
<comment type="cofactor">
    <cofactor>
        <name>L-ascorbate</name>
        <dbReference type="ChEBI" id="CHEBI:38290"/>
    </cofactor>
</comment>
<comment type="pathway">
    <text>Plant hormone biosynthesis; gibberellin biosynthesis.</text>
</comment>
<comment type="tissue specificity">
    <text evidence="6 7 8 9">Expressed in inflorescence and developing siliques. Detected in seeds, roots, cotyledons and leaves. In seeds, specifically detected at the rim of the embryo and the outer integument.</text>
</comment>
<comment type="developmental stage">
    <text evidence="6">Expressed in developing siliques 3-13 days after pollination.</text>
</comment>
<comment type="induction">
    <text evidence="4 5 7 8">Negatively controlled by the level of physiologically active gibberellin. Up-regulated by auxin, paclobutrazol, long day exposure and cold treatment.</text>
</comment>
<comment type="disruption phenotype">
    <text evidence="8">Slightly smaller than the wild type.</text>
</comment>
<comment type="similarity">
    <text evidence="10">Belongs to the iron/ascorbate-dependent oxidoreductase family. GA20OX subfamily.</text>
</comment>
<sequence>MAILCTTTSPAEKEHEPKQDLEKDQTSPLIFNPSLLNLQSQIPNQFIWPDEEKPSIDIPELNVPFIDLSSQDSTLEAPRVIAEACTKHGFFLVVNHGVSESLIADAHRLMESFFDMPLAGKQKAQRKPGESCGYASSFTGRFSTKLPWKETLSFQFSNDNSGSRTVQDYFSDTLGQEFEQFGKVYQDYCEAMSSLSLKIMELLGLSLGVNRDYFRGFFEENDSIMRLNHYPPCQTPDLTLGTGPHCDPSSLTILHQDHVNGLQVFVDNQWQSIRPNPKAFVVNIGDTFMALSNGIFKSCLHRAVVNRESARKSMAFFLCPKKDKVVKPPSDILEKMKTRKYPDFTWSMFLEFTQKHYRADVNTLDSFSNWVITNNNPI</sequence>
<organism>
    <name type="scientific">Arabidopsis thaliana</name>
    <name type="common">Mouse-ear cress</name>
    <dbReference type="NCBI Taxonomy" id="3702"/>
    <lineage>
        <taxon>Eukaryota</taxon>
        <taxon>Viridiplantae</taxon>
        <taxon>Streptophyta</taxon>
        <taxon>Embryophyta</taxon>
        <taxon>Tracheophyta</taxon>
        <taxon>Spermatophyta</taxon>
        <taxon>Magnoliopsida</taxon>
        <taxon>eudicotyledons</taxon>
        <taxon>Gunneridae</taxon>
        <taxon>Pentapetalae</taxon>
        <taxon>rosids</taxon>
        <taxon>malvids</taxon>
        <taxon>Brassicales</taxon>
        <taxon>Brassicaceae</taxon>
        <taxon>Camelineae</taxon>
        <taxon>Arabidopsis</taxon>
    </lineage>
</organism>
<gene>
    <name type="primary">GA20OX2</name>
    <name type="synonym">20ox</name>
    <name type="synonym">At2353</name>
    <name type="ordered locus">At5g51810</name>
    <name type="ORF">MIO24.5</name>
</gene>
<reference key="1">
    <citation type="journal article" date="1995" name="Plant Physiol.">
        <title>Isolation and expression of three gibberellin 20-oxidase cDNA clones from Arabidopsis.</title>
        <authorList>
            <person name="Phillips A.L."/>
            <person name="Ward D.A."/>
            <person name="Uknes S."/>
            <person name="Appleford N.E.J."/>
            <person name="Lange T."/>
            <person name="Huttly A.K."/>
            <person name="Gaskin P."/>
            <person name="Graebe J.E."/>
            <person name="Hedden P."/>
        </authorList>
    </citation>
    <scope>NUCLEOTIDE SEQUENCE [MRNA]</scope>
    <scope>FUNCTION</scope>
    <scope>CATALYTIC ACTIVITY</scope>
    <scope>TISSUE SPECIFICITY</scope>
    <source>
        <strain>cv. Landsberg erecta</strain>
        <tissue>Flower bud</tissue>
        <tissue>Stem</tissue>
    </source>
</reference>
<reference key="2">
    <citation type="journal article" date="1998" name="DNA Res.">
        <title>Structural analysis of Arabidopsis thaliana chromosome 5. IV. Sequence features of the regions of 1,456,315 bp covered by nineteen physically assigned P1 and TAC clones.</title>
        <authorList>
            <person name="Sato S."/>
            <person name="Kaneko T."/>
            <person name="Kotani H."/>
            <person name="Nakamura Y."/>
            <person name="Asamizu E."/>
            <person name="Miyajima N."/>
            <person name="Tabata S."/>
        </authorList>
    </citation>
    <scope>NUCLEOTIDE SEQUENCE [LARGE SCALE GENOMIC DNA]</scope>
</reference>
<reference key="3">
    <citation type="journal article" date="2017" name="Plant J.">
        <title>Araport11: a complete reannotation of the Arabidopsis thaliana reference genome.</title>
        <authorList>
            <person name="Cheng C.Y."/>
            <person name="Krishnakumar V."/>
            <person name="Chan A.P."/>
            <person name="Thibaud-Nissen F."/>
            <person name="Schobel S."/>
            <person name="Town C.D."/>
        </authorList>
    </citation>
    <scope>GENOME REANNOTATION</scope>
    <source>
        <strain>cv. Columbia</strain>
    </source>
</reference>
<reference key="4">
    <citation type="journal article" date="2004" name="Plant Cell">
        <title>Activation of gibberellin biosynthesis and response pathways by low temperature during imbibition of Arabidopsis thaliana seeds.</title>
        <authorList>
            <person name="Yamauchi Y."/>
            <person name="Ogawa M."/>
            <person name="Kuwahara A."/>
            <person name="Hanada A."/>
            <person name="Kamiya Y."/>
            <person name="Yamaguchi S."/>
        </authorList>
    </citation>
    <scope>INDUCTION BY COLD</scope>
</reference>
<reference key="5">
    <citation type="journal article" date="2005" name="Plant Cell Physiol.">
        <title>Contribution of gibberellins to the formation of Arabidopsis seed coat through starch degradation.</title>
        <authorList>
            <person name="Kim Y.C."/>
            <person name="Nakajima M."/>
            <person name="Nakayama A."/>
            <person name="Yamaguchi I."/>
        </authorList>
    </citation>
    <scope>DEVELOPMENTAL STAGE</scope>
    <scope>TISSUE SPECIFICITY</scope>
</reference>
<reference key="6">
    <citation type="journal article" date="2005" name="Plant Physiol.">
        <title>The involvement of gibberellin 20-oxidase genes in phytochrome-regulated petiole elongation of Arabidopsis.</title>
        <authorList>
            <person name="Hisamatsu T."/>
            <person name="King R.W."/>
            <person name="Helliwell C.A."/>
            <person name="Koshioka M."/>
        </authorList>
    </citation>
    <scope>INDUCTION BY LIGHT</scope>
</reference>
<reference key="7">
    <citation type="journal article" date="2006" name="Plant Physiol.">
        <title>Transcriptional regulation of gibberellin metabolism genes by auxin signaling in Arabidopsis.</title>
        <authorList>
            <person name="Frigerio M."/>
            <person name="Alabadi D."/>
            <person name="Perez-Gomez J."/>
            <person name="Garcia-Carcel L."/>
            <person name="Phillips A.L."/>
            <person name="Hedden P."/>
            <person name="Blazquez M.A."/>
        </authorList>
    </citation>
    <scope>INDUCTION BY AUXIN AND PACLOBUTRAZOL</scope>
    <scope>TISSUE SPECIFICITY</scope>
</reference>
<reference key="8">
    <citation type="journal article" date="2008" name="Plant J.">
        <title>The gibberellin biosynthetic genes AtGA20ox1 and AtGA20ox2 act, partially redundantly, to promote growth and development throughout the Arabidopsis life cycle.</title>
        <authorList>
            <person name="Rieu I."/>
            <person name="Ruiz-Rivero O."/>
            <person name="Fernandez-Garcia N."/>
            <person name="Griffiths J."/>
            <person name="Powers S.J."/>
            <person name="Gong F."/>
            <person name="Linhartova T."/>
            <person name="Eriksson S."/>
            <person name="Nilsson O."/>
            <person name="Thomas S.G."/>
            <person name="Phillips A.L."/>
            <person name="Hedden P."/>
        </authorList>
    </citation>
    <scope>FUNCTION</scope>
    <scope>TISSUE SPECIFICITY</scope>
    <scope>DISRUPTION PHENOTYPE</scope>
    <scope>INDUCTION BY GIBBERELLIN</scope>
    <source>
        <strain>cv. Columbia</strain>
    </source>
</reference>
<reference key="9">
    <citation type="journal article" date="2011" name="Gene">
        <title>Evolutionary analysis of three gibberellin oxidase genes in rice, Arabidopsis, and soybean.</title>
        <authorList>
            <person name="Han F."/>
            <person name="Zhu B."/>
        </authorList>
    </citation>
    <scope>3D-STRUCTURE MODELING</scope>
    <scope>GENE FAMILY</scope>
</reference>
<name>GAOX2_ARATH</name>
<protein>
    <recommendedName>
        <fullName evidence="11">Gibberellin 20 oxidase 2</fullName>
        <ecNumber evidence="9">1.14.11.-</ecNumber>
    </recommendedName>
    <alternativeName>
        <fullName evidence="11">GA 20-oxidase 2</fullName>
    </alternativeName>
    <alternativeName>
        <fullName>Gibberellin C-20 oxidase 2</fullName>
    </alternativeName>
</protein>
<evidence type="ECO:0000255" key="1"/>
<evidence type="ECO:0000255" key="2">
    <source>
        <dbReference type="PROSITE-ProRule" id="PRU00805"/>
    </source>
</evidence>
<evidence type="ECO:0000256" key="3">
    <source>
        <dbReference type="SAM" id="MobiDB-lite"/>
    </source>
</evidence>
<evidence type="ECO:0000269" key="4">
    <source>
    </source>
</evidence>
<evidence type="ECO:0000269" key="5">
    <source>
    </source>
</evidence>
<evidence type="ECO:0000269" key="6">
    <source>
    </source>
</evidence>
<evidence type="ECO:0000269" key="7">
    <source>
    </source>
</evidence>
<evidence type="ECO:0000269" key="8">
    <source>
    </source>
</evidence>
<evidence type="ECO:0000269" key="9">
    <source>
    </source>
</evidence>
<evidence type="ECO:0000305" key="10"/>
<evidence type="ECO:0000305" key="11">
    <source>
    </source>
</evidence>
<dbReference type="EC" id="1.14.11.-" evidence="9"/>
<dbReference type="EMBL" id="X83380">
    <property type="protein sequence ID" value="CAA58294.1"/>
    <property type="molecule type" value="mRNA"/>
</dbReference>
<dbReference type="EMBL" id="AB010074">
    <property type="protein sequence ID" value="BAB11250.1"/>
    <property type="molecule type" value="Genomic_DNA"/>
</dbReference>
<dbReference type="EMBL" id="CP002688">
    <property type="protein sequence ID" value="AED96129.1"/>
    <property type="molecule type" value="Genomic_DNA"/>
</dbReference>
<dbReference type="RefSeq" id="NP_199994.1">
    <property type="nucleotide sequence ID" value="NM_124560.4"/>
</dbReference>
<dbReference type="SMR" id="Q39111"/>
<dbReference type="FunCoup" id="Q39111">
    <property type="interactions" value="21"/>
</dbReference>
<dbReference type="STRING" id="3702.Q39111"/>
<dbReference type="PaxDb" id="3702-AT5G51810.1"/>
<dbReference type="ProteomicsDB" id="228896"/>
<dbReference type="EnsemblPlants" id="AT5G51810.1">
    <property type="protein sequence ID" value="AT5G51810.1"/>
    <property type="gene ID" value="AT5G51810"/>
</dbReference>
<dbReference type="GeneID" id="835256"/>
<dbReference type="Gramene" id="AT5G51810.1">
    <property type="protein sequence ID" value="AT5G51810.1"/>
    <property type="gene ID" value="AT5G51810"/>
</dbReference>
<dbReference type="KEGG" id="ath:AT5G51810"/>
<dbReference type="Araport" id="AT5G51810"/>
<dbReference type="TAIR" id="AT5G51810">
    <property type="gene designation" value="GA20OX2"/>
</dbReference>
<dbReference type="eggNOG" id="KOG0143">
    <property type="taxonomic scope" value="Eukaryota"/>
</dbReference>
<dbReference type="HOGENOM" id="CLU_010119_16_3_1"/>
<dbReference type="InParanoid" id="Q39111"/>
<dbReference type="OMA" id="SQFIWPA"/>
<dbReference type="OrthoDB" id="288590at2759"/>
<dbReference type="PhylomeDB" id="Q39111"/>
<dbReference type="BioCyc" id="ARA:AT5G51810-MONOMER"/>
<dbReference type="BioCyc" id="MetaCyc:AT5G51810-MONOMER"/>
<dbReference type="BRENDA" id="1.14.11.12">
    <property type="organism ID" value="399"/>
</dbReference>
<dbReference type="UniPathway" id="UPA00390"/>
<dbReference type="PRO" id="PR:Q39111"/>
<dbReference type="Proteomes" id="UP000006548">
    <property type="component" value="Chromosome 5"/>
</dbReference>
<dbReference type="ExpressionAtlas" id="Q39111">
    <property type="expression patterns" value="baseline and differential"/>
</dbReference>
<dbReference type="GO" id="GO:0045544">
    <property type="term" value="F:gibberellin 20-oxidase activity"/>
    <property type="evidence" value="ECO:0000314"/>
    <property type="project" value="TAIR"/>
</dbReference>
<dbReference type="GO" id="GO:0046872">
    <property type="term" value="F:metal ion binding"/>
    <property type="evidence" value="ECO:0007669"/>
    <property type="project" value="UniProtKB-KW"/>
</dbReference>
<dbReference type="GO" id="GO:0009686">
    <property type="term" value="P:gibberellin biosynthetic process"/>
    <property type="evidence" value="ECO:0000314"/>
    <property type="project" value="TAIR"/>
</dbReference>
<dbReference type="GO" id="GO:0009739">
    <property type="term" value="P:response to gibberellin"/>
    <property type="evidence" value="ECO:0000270"/>
    <property type="project" value="TAIR"/>
</dbReference>
<dbReference type="GO" id="GO:0009639">
    <property type="term" value="P:response to red or far red light"/>
    <property type="evidence" value="ECO:0000270"/>
    <property type="project" value="TAIR"/>
</dbReference>
<dbReference type="FunFam" id="2.60.120.330:FF:000003">
    <property type="entry name" value="Gibberellin 20 oxidase 2"/>
    <property type="match status" value="1"/>
</dbReference>
<dbReference type="Gene3D" id="2.60.120.330">
    <property type="entry name" value="B-lactam Antibiotic, Isopenicillin N Synthase, Chain"/>
    <property type="match status" value="1"/>
</dbReference>
<dbReference type="InterPro" id="IPR026992">
    <property type="entry name" value="DIOX_N"/>
</dbReference>
<dbReference type="InterPro" id="IPR044861">
    <property type="entry name" value="IPNS-like_FE2OG_OXY"/>
</dbReference>
<dbReference type="InterPro" id="IPR027443">
    <property type="entry name" value="IPNS-like_sf"/>
</dbReference>
<dbReference type="InterPro" id="IPR050231">
    <property type="entry name" value="Iron_ascorbate_oxido_reductase"/>
</dbReference>
<dbReference type="InterPro" id="IPR005123">
    <property type="entry name" value="Oxoglu/Fe-dep_dioxygenase_dom"/>
</dbReference>
<dbReference type="PANTHER" id="PTHR47990">
    <property type="entry name" value="2-OXOGLUTARATE (2OG) AND FE(II)-DEPENDENT OXYGENASE SUPERFAMILY PROTEIN-RELATED"/>
    <property type="match status" value="1"/>
</dbReference>
<dbReference type="Pfam" id="PF03171">
    <property type="entry name" value="2OG-FeII_Oxy"/>
    <property type="match status" value="1"/>
</dbReference>
<dbReference type="Pfam" id="PF14226">
    <property type="entry name" value="DIOX_N"/>
    <property type="match status" value="1"/>
</dbReference>
<dbReference type="PRINTS" id="PR00682">
    <property type="entry name" value="IPNSYNTHASE"/>
</dbReference>
<dbReference type="SUPFAM" id="SSF51197">
    <property type="entry name" value="Clavaminate synthase-like"/>
    <property type="match status" value="1"/>
</dbReference>
<dbReference type="PROSITE" id="PS51471">
    <property type="entry name" value="FE2OG_OXY"/>
    <property type="match status" value="1"/>
</dbReference>
<proteinExistence type="evidence at protein level"/>